<comment type="function">
    <text evidence="1">Promotes mitochondrial protein synthesis. May act as a fidelity factor of the translation reaction, by catalyzing a one-codon backward translocation of tRNAs on improperly translocated ribosomes. Binds to mitochondrial ribosomes in a GTP-dependent manner.</text>
</comment>
<comment type="catalytic activity">
    <reaction evidence="1">
        <text>GTP + H2O = GDP + phosphate + H(+)</text>
        <dbReference type="Rhea" id="RHEA:19669"/>
        <dbReference type="ChEBI" id="CHEBI:15377"/>
        <dbReference type="ChEBI" id="CHEBI:15378"/>
        <dbReference type="ChEBI" id="CHEBI:37565"/>
        <dbReference type="ChEBI" id="CHEBI:43474"/>
        <dbReference type="ChEBI" id="CHEBI:58189"/>
    </reaction>
</comment>
<comment type="subcellular location">
    <subcellularLocation>
        <location evidence="1">Mitochondrion inner membrane</location>
        <topology evidence="1">Peripheral membrane protein</topology>
        <orientation evidence="1">Matrix side</orientation>
    </subcellularLocation>
</comment>
<comment type="similarity">
    <text evidence="2">Belongs to the TRAFAC class translation factor GTPase superfamily. Classic translation factor GTPase family. LepA subfamily.</text>
</comment>
<comment type="sequence caution" evidence="2">
    <conflict type="erroneous gene model prediction">
        <sequence resource="EMBL-CDS" id="EAA63997"/>
    </conflict>
    <text>The predicted gene AN2512 has been split into 2 genes: AN10315 and AN10316.</text>
</comment>
<accession>C8VPJ1</accession>
<accession>Q5BAB8</accession>
<proteinExistence type="inferred from homology"/>
<gene>
    <name type="primary">guf1</name>
    <name type="ORF">AN10315</name>
</gene>
<sequence>MRGCLQLARWLSAAPNWPASSLLKAPGSSFATRLFTTTSSYKAKGPSKVPMTDLEARISAIPIERYRNFCIVAHVDHGKSTLSDRLLELTGTIKPGMNKQVLDKLDVERERGITVKAQTCTMIYNHKGEDYLLHLVDTPGHVDFRAEVSRSYASCGGALLLVDASQGIQAQTVANFYLAFSQGLELIPVINKVDLPSAEPERALEQLEQSFELDTEDAVLVSAKTGLNVEQLLPTVVEKIPAPIGDCKRPLRMLLVDSWYDSYKGVICLVRVFDGEVRAGQQVVSFATGIKYYVGEVGIQYPLETPQTVLRAGQVGYIFFNPGMKRSKEAKIGDTFTTVGSEKAVQPLPGFEEPKAMVFVAAYPVDADHFEHLEDSINQLVLNDRSITVQKESSEALGAGFRLGFLGTLHCSVFEDRLRQEHGASIIITPPSVPVKVVWKDGKEDIITNPNRFPDEDDVRMKVAELQEPYVMATLTFPDEYLGTVIELCEANRGEQKSLEYFTPTQVILKYELPLAQLVDDFFGKLKGGTKGYASLDYEESGWKPSNIVKLQLLVNKAPVDAVARLVHYSQTDRLGRQWVTKFKEHVDRQLFEIIIQAAVGKKIVARETVKPYRKDVLAKLHASDVSRRRKLLEKQKEGRKRLRAVGNVVIEHKAFQAFLAK</sequence>
<keyword id="KW-0342">GTP-binding</keyword>
<keyword id="KW-0378">Hydrolase</keyword>
<keyword id="KW-0472">Membrane</keyword>
<keyword id="KW-0496">Mitochondrion</keyword>
<keyword id="KW-0999">Mitochondrion inner membrane</keyword>
<keyword id="KW-0547">Nucleotide-binding</keyword>
<keyword id="KW-0648">Protein biosynthesis</keyword>
<keyword id="KW-1185">Reference proteome</keyword>
<keyword id="KW-0809">Transit peptide</keyword>
<name>GUF1_EMENI</name>
<reference key="1">
    <citation type="journal article" date="2005" name="Nature">
        <title>Sequencing of Aspergillus nidulans and comparative analysis with A. fumigatus and A. oryzae.</title>
        <authorList>
            <person name="Galagan J.E."/>
            <person name="Calvo S.E."/>
            <person name="Cuomo C."/>
            <person name="Ma L.-J."/>
            <person name="Wortman J.R."/>
            <person name="Batzoglou S."/>
            <person name="Lee S.-I."/>
            <person name="Bastuerkmen M."/>
            <person name="Spevak C.C."/>
            <person name="Clutterbuck J."/>
            <person name="Kapitonov V."/>
            <person name="Jurka J."/>
            <person name="Scazzocchio C."/>
            <person name="Farman M.L."/>
            <person name="Butler J."/>
            <person name="Purcell S."/>
            <person name="Harris S."/>
            <person name="Braus G.H."/>
            <person name="Draht O."/>
            <person name="Busch S."/>
            <person name="D'Enfert C."/>
            <person name="Bouchier C."/>
            <person name="Goldman G.H."/>
            <person name="Bell-Pedersen D."/>
            <person name="Griffiths-Jones S."/>
            <person name="Doonan J.H."/>
            <person name="Yu J."/>
            <person name="Vienken K."/>
            <person name="Pain A."/>
            <person name="Freitag M."/>
            <person name="Selker E.U."/>
            <person name="Archer D.B."/>
            <person name="Penalva M.A."/>
            <person name="Oakley B.R."/>
            <person name="Momany M."/>
            <person name="Tanaka T."/>
            <person name="Kumagai T."/>
            <person name="Asai K."/>
            <person name="Machida M."/>
            <person name="Nierman W.C."/>
            <person name="Denning D.W."/>
            <person name="Caddick M.X."/>
            <person name="Hynes M."/>
            <person name="Paoletti M."/>
            <person name="Fischer R."/>
            <person name="Miller B.L."/>
            <person name="Dyer P.S."/>
            <person name="Sachs M.S."/>
            <person name="Osmani S.A."/>
            <person name="Birren B.W."/>
        </authorList>
    </citation>
    <scope>NUCLEOTIDE SEQUENCE [LARGE SCALE GENOMIC DNA]</scope>
    <source>
        <strain>FGSC A4 / ATCC 38163 / CBS 112.46 / NRRL 194 / M139</strain>
    </source>
</reference>
<reference key="2">
    <citation type="journal article" date="2009" name="Fungal Genet. Biol.">
        <title>The 2008 update of the Aspergillus nidulans genome annotation: a community effort.</title>
        <authorList>
            <person name="Wortman J.R."/>
            <person name="Gilsenan J.M."/>
            <person name="Joardar V."/>
            <person name="Deegan J."/>
            <person name="Clutterbuck J."/>
            <person name="Andersen M.R."/>
            <person name="Archer D."/>
            <person name="Bencina M."/>
            <person name="Braus G."/>
            <person name="Coutinho P."/>
            <person name="von Dohren H."/>
            <person name="Doonan J."/>
            <person name="Driessen A.J."/>
            <person name="Durek P."/>
            <person name="Espeso E."/>
            <person name="Fekete E."/>
            <person name="Flipphi M."/>
            <person name="Estrada C.G."/>
            <person name="Geysens S."/>
            <person name="Goldman G."/>
            <person name="de Groot P.W."/>
            <person name="Hansen K."/>
            <person name="Harris S.D."/>
            <person name="Heinekamp T."/>
            <person name="Helmstaedt K."/>
            <person name="Henrissat B."/>
            <person name="Hofmann G."/>
            <person name="Homan T."/>
            <person name="Horio T."/>
            <person name="Horiuchi H."/>
            <person name="James S."/>
            <person name="Jones M."/>
            <person name="Karaffa L."/>
            <person name="Karanyi Z."/>
            <person name="Kato M."/>
            <person name="Keller N."/>
            <person name="Kelly D.E."/>
            <person name="Kiel J.A."/>
            <person name="Kim J.M."/>
            <person name="van der Klei I.J."/>
            <person name="Klis F.M."/>
            <person name="Kovalchuk A."/>
            <person name="Krasevec N."/>
            <person name="Kubicek C.P."/>
            <person name="Liu B."/>
            <person name="Maccabe A."/>
            <person name="Meyer V."/>
            <person name="Mirabito P."/>
            <person name="Miskei M."/>
            <person name="Mos M."/>
            <person name="Mullins J."/>
            <person name="Nelson D.R."/>
            <person name="Nielsen J."/>
            <person name="Oakley B.R."/>
            <person name="Osmani S.A."/>
            <person name="Pakula T."/>
            <person name="Paszewski A."/>
            <person name="Paulsen I."/>
            <person name="Pilsyk S."/>
            <person name="Pocsi I."/>
            <person name="Punt P.J."/>
            <person name="Ram A.F."/>
            <person name="Ren Q."/>
            <person name="Robellet X."/>
            <person name="Robson G."/>
            <person name="Seiboth B."/>
            <person name="van Solingen P."/>
            <person name="Specht T."/>
            <person name="Sun J."/>
            <person name="Taheri-Talesh N."/>
            <person name="Takeshita N."/>
            <person name="Ussery D."/>
            <person name="vanKuyk P.A."/>
            <person name="Visser H."/>
            <person name="van de Vondervoort P.J."/>
            <person name="de Vries R.P."/>
            <person name="Walton J."/>
            <person name="Xiang X."/>
            <person name="Xiong Y."/>
            <person name="Zeng A.P."/>
            <person name="Brandt B.W."/>
            <person name="Cornell M.J."/>
            <person name="van den Hondel C.A."/>
            <person name="Visser J."/>
            <person name="Oliver S.G."/>
            <person name="Turner G."/>
        </authorList>
    </citation>
    <scope>GENOME REANNOTATION</scope>
    <source>
        <strain>FGSC A4 / ATCC 38163 / CBS 112.46 / NRRL 194 / M139</strain>
    </source>
</reference>
<organism>
    <name type="scientific">Emericella nidulans (strain FGSC A4 / ATCC 38163 / CBS 112.46 / NRRL 194 / M139)</name>
    <name type="common">Aspergillus nidulans</name>
    <dbReference type="NCBI Taxonomy" id="227321"/>
    <lineage>
        <taxon>Eukaryota</taxon>
        <taxon>Fungi</taxon>
        <taxon>Dikarya</taxon>
        <taxon>Ascomycota</taxon>
        <taxon>Pezizomycotina</taxon>
        <taxon>Eurotiomycetes</taxon>
        <taxon>Eurotiomycetidae</taxon>
        <taxon>Eurotiales</taxon>
        <taxon>Aspergillaceae</taxon>
        <taxon>Aspergillus</taxon>
        <taxon>Aspergillus subgen. Nidulantes</taxon>
    </lineage>
</organism>
<dbReference type="EC" id="3.6.5.-"/>
<dbReference type="EMBL" id="AACD01000042">
    <property type="protein sequence ID" value="EAA63997.1"/>
    <property type="status" value="ALT_SEQ"/>
    <property type="molecule type" value="Genomic_DNA"/>
</dbReference>
<dbReference type="EMBL" id="BN001307">
    <property type="protein sequence ID" value="CBF87002.1"/>
    <property type="molecule type" value="Genomic_DNA"/>
</dbReference>
<dbReference type="RefSeq" id="XP_660116.1">
    <property type="nucleotide sequence ID" value="XM_655024.1"/>
</dbReference>
<dbReference type="SMR" id="C8VPJ1"/>
<dbReference type="FunCoup" id="C8VPJ1">
    <property type="interactions" value="706"/>
</dbReference>
<dbReference type="STRING" id="227321.C8VPJ1"/>
<dbReference type="EnsemblFungi" id="CBF87002">
    <property type="protein sequence ID" value="CBF87002"/>
    <property type="gene ID" value="ANIA_10315"/>
</dbReference>
<dbReference type="KEGG" id="ani:ANIA_10315"/>
<dbReference type="VEuPathDB" id="FungiDB:AN10315"/>
<dbReference type="eggNOG" id="KOG0462">
    <property type="taxonomic scope" value="Eukaryota"/>
</dbReference>
<dbReference type="HOGENOM" id="CLU_000487_3_2_1"/>
<dbReference type="InParanoid" id="C8VPJ1"/>
<dbReference type="OMA" id="QVKCDEN"/>
<dbReference type="OrthoDB" id="1074at2759"/>
<dbReference type="Proteomes" id="UP000000560">
    <property type="component" value="Chromosome VII"/>
</dbReference>
<dbReference type="GO" id="GO:0005743">
    <property type="term" value="C:mitochondrial inner membrane"/>
    <property type="evidence" value="ECO:0007669"/>
    <property type="project" value="UniProtKB-SubCell"/>
</dbReference>
<dbReference type="GO" id="GO:0005759">
    <property type="term" value="C:mitochondrial matrix"/>
    <property type="evidence" value="ECO:0007669"/>
    <property type="project" value="UniProtKB-UniRule"/>
</dbReference>
<dbReference type="GO" id="GO:0005739">
    <property type="term" value="C:mitochondrion"/>
    <property type="evidence" value="ECO:0000318"/>
    <property type="project" value="GO_Central"/>
</dbReference>
<dbReference type="GO" id="GO:0005525">
    <property type="term" value="F:GTP binding"/>
    <property type="evidence" value="ECO:0007669"/>
    <property type="project" value="UniProtKB-UniRule"/>
</dbReference>
<dbReference type="GO" id="GO:0003924">
    <property type="term" value="F:GTPase activity"/>
    <property type="evidence" value="ECO:0007669"/>
    <property type="project" value="UniProtKB-UniRule"/>
</dbReference>
<dbReference type="GO" id="GO:0097177">
    <property type="term" value="F:mitochondrial ribosome binding"/>
    <property type="evidence" value="ECO:0000318"/>
    <property type="project" value="GO_Central"/>
</dbReference>
<dbReference type="GO" id="GO:0045727">
    <property type="term" value="P:positive regulation of translation"/>
    <property type="evidence" value="ECO:0000318"/>
    <property type="project" value="GO_Central"/>
</dbReference>
<dbReference type="GO" id="GO:0006412">
    <property type="term" value="P:translation"/>
    <property type="evidence" value="ECO:0007669"/>
    <property type="project" value="UniProtKB-KW"/>
</dbReference>
<dbReference type="CDD" id="cd03699">
    <property type="entry name" value="EF4_II"/>
    <property type="match status" value="1"/>
</dbReference>
<dbReference type="CDD" id="cd01890">
    <property type="entry name" value="LepA"/>
    <property type="match status" value="1"/>
</dbReference>
<dbReference type="CDD" id="cd03709">
    <property type="entry name" value="lepA_C"/>
    <property type="match status" value="1"/>
</dbReference>
<dbReference type="FunFam" id="3.40.50.300:FF:000078">
    <property type="entry name" value="Elongation factor 4"/>
    <property type="match status" value="1"/>
</dbReference>
<dbReference type="FunFam" id="2.40.30.10:FF:000015">
    <property type="entry name" value="Translation factor GUF1, mitochondrial"/>
    <property type="match status" value="1"/>
</dbReference>
<dbReference type="FunFam" id="3.30.70.240:FF:000007">
    <property type="entry name" value="Translation factor GUF1, mitochondrial"/>
    <property type="match status" value="1"/>
</dbReference>
<dbReference type="FunFam" id="3.30.70.2570:FF:000001">
    <property type="entry name" value="Translation factor GUF1, mitochondrial"/>
    <property type="match status" value="1"/>
</dbReference>
<dbReference type="FunFam" id="3.30.70.870:FF:000004">
    <property type="entry name" value="Translation factor GUF1, mitochondrial"/>
    <property type="match status" value="1"/>
</dbReference>
<dbReference type="Gene3D" id="3.30.70.240">
    <property type="match status" value="1"/>
</dbReference>
<dbReference type="Gene3D" id="3.30.70.2570">
    <property type="entry name" value="Elongation factor 4, C-terminal domain"/>
    <property type="match status" value="1"/>
</dbReference>
<dbReference type="Gene3D" id="3.30.70.870">
    <property type="entry name" value="Elongation Factor G (Translational Gtpase), domain 3"/>
    <property type="match status" value="1"/>
</dbReference>
<dbReference type="Gene3D" id="3.40.50.300">
    <property type="entry name" value="P-loop containing nucleotide triphosphate hydrolases"/>
    <property type="match status" value="1"/>
</dbReference>
<dbReference type="Gene3D" id="2.40.30.10">
    <property type="entry name" value="Translation factors"/>
    <property type="match status" value="1"/>
</dbReference>
<dbReference type="HAMAP" id="MF_00071">
    <property type="entry name" value="LepA"/>
    <property type="match status" value="1"/>
</dbReference>
<dbReference type="InterPro" id="IPR006297">
    <property type="entry name" value="EF-4"/>
</dbReference>
<dbReference type="InterPro" id="IPR035647">
    <property type="entry name" value="EFG_III/V"/>
</dbReference>
<dbReference type="InterPro" id="IPR000640">
    <property type="entry name" value="EFG_V-like"/>
</dbReference>
<dbReference type="InterPro" id="IPR031157">
    <property type="entry name" value="G_TR_CS"/>
</dbReference>
<dbReference type="InterPro" id="IPR038363">
    <property type="entry name" value="LepA_C_sf"/>
</dbReference>
<dbReference type="InterPro" id="IPR013842">
    <property type="entry name" value="LepA_CTD"/>
</dbReference>
<dbReference type="InterPro" id="IPR035654">
    <property type="entry name" value="LepA_IV"/>
</dbReference>
<dbReference type="InterPro" id="IPR027417">
    <property type="entry name" value="P-loop_NTPase"/>
</dbReference>
<dbReference type="InterPro" id="IPR005225">
    <property type="entry name" value="Small_GTP-bd"/>
</dbReference>
<dbReference type="InterPro" id="IPR000795">
    <property type="entry name" value="T_Tr_GTP-bd_dom"/>
</dbReference>
<dbReference type="InterPro" id="IPR009000">
    <property type="entry name" value="Transl_B-barrel_sf"/>
</dbReference>
<dbReference type="NCBIfam" id="TIGR01393">
    <property type="entry name" value="lepA"/>
    <property type="match status" value="1"/>
</dbReference>
<dbReference type="NCBIfam" id="TIGR00231">
    <property type="entry name" value="small_GTP"/>
    <property type="match status" value="1"/>
</dbReference>
<dbReference type="PANTHER" id="PTHR43512:SF7">
    <property type="entry name" value="TRANSLATION FACTOR GUF1, MITOCHONDRIAL"/>
    <property type="match status" value="1"/>
</dbReference>
<dbReference type="PANTHER" id="PTHR43512">
    <property type="entry name" value="TRANSLATION FACTOR GUF1-RELATED"/>
    <property type="match status" value="1"/>
</dbReference>
<dbReference type="Pfam" id="PF00679">
    <property type="entry name" value="EFG_C"/>
    <property type="match status" value="1"/>
</dbReference>
<dbReference type="Pfam" id="PF00009">
    <property type="entry name" value="GTP_EFTU"/>
    <property type="match status" value="1"/>
</dbReference>
<dbReference type="Pfam" id="PF06421">
    <property type="entry name" value="LepA_C"/>
    <property type="match status" value="1"/>
</dbReference>
<dbReference type="PRINTS" id="PR00315">
    <property type="entry name" value="ELONGATNFCT"/>
</dbReference>
<dbReference type="SUPFAM" id="SSF54980">
    <property type="entry name" value="EF-G C-terminal domain-like"/>
    <property type="match status" value="2"/>
</dbReference>
<dbReference type="SUPFAM" id="SSF52540">
    <property type="entry name" value="P-loop containing nucleoside triphosphate hydrolases"/>
    <property type="match status" value="1"/>
</dbReference>
<dbReference type="SUPFAM" id="SSF50447">
    <property type="entry name" value="Translation proteins"/>
    <property type="match status" value="1"/>
</dbReference>
<dbReference type="PROSITE" id="PS00301">
    <property type="entry name" value="G_TR_1"/>
    <property type="match status" value="1"/>
</dbReference>
<dbReference type="PROSITE" id="PS51722">
    <property type="entry name" value="G_TR_2"/>
    <property type="match status" value="1"/>
</dbReference>
<evidence type="ECO:0000255" key="1">
    <source>
        <dbReference type="HAMAP-Rule" id="MF_03137"/>
    </source>
</evidence>
<evidence type="ECO:0000305" key="2"/>
<feature type="transit peptide" description="Mitochondrion" evidence="1">
    <location>
        <begin position="1"/>
        <end position="42"/>
    </location>
</feature>
<feature type="chain" id="PRO_0000402885" description="Translation factor guf1, mitochondrial">
    <location>
        <begin position="43"/>
        <end position="662"/>
    </location>
</feature>
<feature type="domain" description="tr-type G">
    <location>
        <begin position="64"/>
        <end position="244"/>
    </location>
</feature>
<feature type="binding site" evidence="1">
    <location>
        <begin position="73"/>
        <end position="80"/>
    </location>
    <ligand>
        <name>GTP</name>
        <dbReference type="ChEBI" id="CHEBI:37565"/>
    </ligand>
</feature>
<feature type="binding site" evidence="1">
    <location>
        <begin position="137"/>
        <end position="141"/>
    </location>
    <ligand>
        <name>GTP</name>
        <dbReference type="ChEBI" id="CHEBI:37565"/>
    </ligand>
</feature>
<feature type="binding site" evidence="1">
    <location>
        <begin position="191"/>
        <end position="194"/>
    </location>
    <ligand>
        <name>GTP</name>
        <dbReference type="ChEBI" id="CHEBI:37565"/>
    </ligand>
</feature>
<protein>
    <recommendedName>
        <fullName evidence="1">Translation factor guf1, mitochondrial</fullName>
        <ecNumber>3.6.5.-</ecNumber>
    </recommendedName>
    <alternativeName>
        <fullName evidence="1">Elongation factor 4 homolog</fullName>
        <shortName evidence="1">EF-4</shortName>
    </alternativeName>
    <alternativeName>
        <fullName evidence="1">GTPase guf1</fullName>
    </alternativeName>
    <alternativeName>
        <fullName evidence="1">Ribosomal back-translocase</fullName>
    </alternativeName>
</protein>